<protein>
    <recommendedName>
        <fullName evidence="1">Adenine phosphoribosyltransferase</fullName>
        <shortName evidence="1">APRT</shortName>
        <ecNumber evidence="1">2.4.2.7</ecNumber>
    </recommendedName>
</protein>
<gene>
    <name evidence="1" type="primary">apt</name>
    <name type="ordered locus">Rfer_4239</name>
</gene>
<proteinExistence type="inferred from homology"/>
<evidence type="ECO:0000255" key="1">
    <source>
        <dbReference type="HAMAP-Rule" id="MF_00004"/>
    </source>
</evidence>
<sequence length="194" mass="21194">MPTPALTRYSMQNLSVDQYLRAHIRTVPDWPAPGVQFRDITPLLQDAKVFRVLIDAFIHRYMDPSIRPDVVAGLDARGFILGAVVAYELNVGFVPIRKKGKLPFTTVEETYELEYGSATVELHTDAVKPGDRVLLIDDLIATGGTMMAGMKLLEKLGAQVIEGAAIVDLPELGGSDKLRASGLALFTLLDFSGH</sequence>
<name>APT_ALBFT</name>
<organism>
    <name type="scientific">Albidiferax ferrireducens (strain ATCC BAA-621 / DSM 15236 / T118)</name>
    <name type="common">Rhodoferax ferrireducens</name>
    <dbReference type="NCBI Taxonomy" id="338969"/>
    <lineage>
        <taxon>Bacteria</taxon>
        <taxon>Pseudomonadati</taxon>
        <taxon>Pseudomonadota</taxon>
        <taxon>Betaproteobacteria</taxon>
        <taxon>Burkholderiales</taxon>
        <taxon>Comamonadaceae</taxon>
        <taxon>Rhodoferax</taxon>
    </lineage>
</organism>
<keyword id="KW-0963">Cytoplasm</keyword>
<keyword id="KW-0328">Glycosyltransferase</keyword>
<keyword id="KW-0660">Purine salvage</keyword>
<keyword id="KW-1185">Reference proteome</keyword>
<keyword id="KW-0808">Transferase</keyword>
<comment type="function">
    <text evidence="1">Catalyzes a salvage reaction resulting in the formation of AMP, that is energically less costly than de novo synthesis.</text>
</comment>
<comment type="catalytic activity">
    <reaction evidence="1">
        <text>AMP + diphosphate = 5-phospho-alpha-D-ribose 1-diphosphate + adenine</text>
        <dbReference type="Rhea" id="RHEA:16609"/>
        <dbReference type="ChEBI" id="CHEBI:16708"/>
        <dbReference type="ChEBI" id="CHEBI:33019"/>
        <dbReference type="ChEBI" id="CHEBI:58017"/>
        <dbReference type="ChEBI" id="CHEBI:456215"/>
        <dbReference type="EC" id="2.4.2.7"/>
    </reaction>
</comment>
<comment type="pathway">
    <text evidence="1">Purine metabolism; AMP biosynthesis via salvage pathway; AMP from adenine: step 1/1.</text>
</comment>
<comment type="subunit">
    <text evidence="1">Homodimer.</text>
</comment>
<comment type="subcellular location">
    <subcellularLocation>
        <location evidence="1">Cytoplasm</location>
    </subcellularLocation>
</comment>
<comment type="similarity">
    <text evidence="1">Belongs to the purine/pyrimidine phosphoribosyltransferase family.</text>
</comment>
<feature type="chain" id="PRO_0000321395" description="Adenine phosphoribosyltransferase">
    <location>
        <begin position="1"/>
        <end position="194"/>
    </location>
</feature>
<accession>Q21QM7</accession>
<dbReference type="EC" id="2.4.2.7" evidence="1"/>
<dbReference type="EMBL" id="CP000267">
    <property type="protein sequence ID" value="ABD71926.1"/>
    <property type="molecule type" value="Genomic_DNA"/>
</dbReference>
<dbReference type="SMR" id="Q21QM7"/>
<dbReference type="STRING" id="338969.Rfer_4239"/>
<dbReference type="KEGG" id="rfr:Rfer_4239"/>
<dbReference type="eggNOG" id="COG0503">
    <property type="taxonomic scope" value="Bacteria"/>
</dbReference>
<dbReference type="HOGENOM" id="CLU_063339_3_0_4"/>
<dbReference type="UniPathway" id="UPA00588">
    <property type="reaction ID" value="UER00646"/>
</dbReference>
<dbReference type="Proteomes" id="UP000008332">
    <property type="component" value="Chromosome"/>
</dbReference>
<dbReference type="GO" id="GO:0005737">
    <property type="term" value="C:cytoplasm"/>
    <property type="evidence" value="ECO:0007669"/>
    <property type="project" value="UniProtKB-SubCell"/>
</dbReference>
<dbReference type="GO" id="GO:0002055">
    <property type="term" value="F:adenine binding"/>
    <property type="evidence" value="ECO:0007669"/>
    <property type="project" value="TreeGrafter"/>
</dbReference>
<dbReference type="GO" id="GO:0003999">
    <property type="term" value="F:adenine phosphoribosyltransferase activity"/>
    <property type="evidence" value="ECO:0007669"/>
    <property type="project" value="UniProtKB-UniRule"/>
</dbReference>
<dbReference type="GO" id="GO:0016208">
    <property type="term" value="F:AMP binding"/>
    <property type="evidence" value="ECO:0007669"/>
    <property type="project" value="TreeGrafter"/>
</dbReference>
<dbReference type="GO" id="GO:0006168">
    <property type="term" value="P:adenine salvage"/>
    <property type="evidence" value="ECO:0007669"/>
    <property type="project" value="InterPro"/>
</dbReference>
<dbReference type="GO" id="GO:0044209">
    <property type="term" value="P:AMP salvage"/>
    <property type="evidence" value="ECO:0007669"/>
    <property type="project" value="UniProtKB-UniRule"/>
</dbReference>
<dbReference type="GO" id="GO:0006166">
    <property type="term" value="P:purine ribonucleoside salvage"/>
    <property type="evidence" value="ECO:0007669"/>
    <property type="project" value="UniProtKB-KW"/>
</dbReference>
<dbReference type="CDD" id="cd06223">
    <property type="entry name" value="PRTases_typeI"/>
    <property type="match status" value="1"/>
</dbReference>
<dbReference type="FunFam" id="3.40.50.2020:FF:000021">
    <property type="entry name" value="Adenine phosphoribosyltransferase"/>
    <property type="match status" value="1"/>
</dbReference>
<dbReference type="Gene3D" id="3.40.50.2020">
    <property type="match status" value="1"/>
</dbReference>
<dbReference type="HAMAP" id="MF_00004">
    <property type="entry name" value="Aden_phosphoribosyltr"/>
    <property type="match status" value="1"/>
</dbReference>
<dbReference type="InterPro" id="IPR005764">
    <property type="entry name" value="Ade_phspho_trans"/>
</dbReference>
<dbReference type="InterPro" id="IPR000836">
    <property type="entry name" value="PRibTrfase_dom"/>
</dbReference>
<dbReference type="InterPro" id="IPR029057">
    <property type="entry name" value="PRTase-like"/>
</dbReference>
<dbReference type="InterPro" id="IPR050054">
    <property type="entry name" value="UPRTase/APRTase"/>
</dbReference>
<dbReference type="NCBIfam" id="TIGR01090">
    <property type="entry name" value="apt"/>
    <property type="match status" value="1"/>
</dbReference>
<dbReference type="NCBIfam" id="NF002634">
    <property type="entry name" value="PRK02304.1-3"/>
    <property type="match status" value="1"/>
</dbReference>
<dbReference type="NCBIfam" id="NF002636">
    <property type="entry name" value="PRK02304.1-5"/>
    <property type="match status" value="1"/>
</dbReference>
<dbReference type="PANTHER" id="PTHR32315">
    <property type="entry name" value="ADENINE PHOSPHORIBOSYLTRANSFERASE"/>
    <property type="match status" value="1"/>
</dbReference>
<dbReference type="PANTHER" id="PTHR32315:SF3">
    <property type="entry name" value="ADENINE PHOSPHORIBOSYLTRANSFERASE"/>
    <property type="match status" value="1"/>
</dbReference>
<dbReference type="Pfam" id="PF00156">
    <property type="entry name" value="Pribosyltran"/>
    <property type="match status" value="1"/>
</dbReference>
<dbReference type="SUPFAM" id="SSF53271">
    <property type="entry name" value="PRTase-like"/>
    <property type="match status" value="1"/>
</dbReference>
<dbReference type="PROSITE" id="PS00103">
    <property type="entry name" value="PUR_PYR_PR_TRANSFER"/>
    <property type="match status" value="1"/>
</dbReference>
<reference key="1">
    <citation type="submission" date="2006-02" db="EMBL/GenBank/DDBJ databases">
        <title>Complete sequence of chromosome of Rhodoferax ferrireducens DSM 15236.</title>
        <authorList>
            <person name="Copeland A."/>
            <person name="Lucas S."/>
            <person name="Lapidus A."/>
            <person name="Barry K."/>
            <person name="Detter J.C."/>
            <person name="Glavina del Rio T."/>
            <person name="Hammon N."/>
            <person name="Israni S."/>
            <person name="Pitluck S."/>
            <person name="Brettin T."/>
            <person name="Bruce D."/>
            <person name="Han C."/>
            <person name="Tapia R."/>
            <person name="Gilna P."/>
            <person name="Kiss H."/>
            <person name="Schmutz J."/>
            <person name="Larimer F."/>
            <person name="Land M."/>
            <person name="Kyrpides N."/>
            <person name="Ivanova N."/>
            <person name="Richardson P."/>
        </authorList>
    </citation>
    <scope>NUCLEOTIDE SEQUENCE [LARGE SCALE GENOMIC DNA]</scope>
    <source>
        <strain>ATCC BAA-621 / DSM 15236 / T118</strain>
    </source>
</reference>